<sequence length="128" mass="14449">PFMFRPRKQVFPDPRSGSVINGSNPTAERPCQQSYGISFYGFARCQRGRPKSNEDYKDIKFSIGCMGKCKRNTKQPRVLEAALEQMCAADCRDDNSSDASGPFDSALLRNIDGRRDYKPDKSVRRNSS</sequence>
<feature type="chain" id="PRO_0000423152" description="Protein 2B*">
    <location>
        <begin position="1"/>
        <end position="128"/>
    </location>
</feature>
<feature type="region of interest" description="Disordered" evidence="2">
    <location>
        <begin position="1"/>
        <end position="27"/>
    </location>
</feature>
<feature type="region of interest" description="Disordered" evidence="2">
    <location>
        <begin position="92"/>
        <end position="128"/>
    </location>
</feature>
<feature type="compositionally biased region" description="Polar residues" evidence="2">
    <location>
        <begin position="18"/>
        <end position="27"/>
    </location>
</feature>
<feature type="compositionally biased region" description="Basic and acidic residues" evidence="2">
    <location>
        <begin position="111"/>
        <end position="128"/>
    </location>
</feature>
<reference key="1">
    <citation type="journal article" date="1984" name="Nucleic Acids Res.">
        <title>The nucleotide and deduced amino acid sequences of the encephalomyocarditis viral polyprotein coding region.</title>
        <authorList>
            <person name="Palmenberg A.C."/>
            <person name="Kirby E.M."/>
            <person name="Janda M.R."/>
            <person name="Drake N.L."/>
            <person name="Duke G.M."/>
            <person name="Potratz K.F."/>
            <person name="Collett M.S."/>
        </authorList>
    </citation>
    <scope>NUCLEOTIDE SEQUENCE [GENOMIC RNA]</scope>
</reference>
<evidence type="ECO:0000250" key="1">
    <source>
        <dbReference type="UniProtKB" id="P0DJX8"/>
    </source>
</evidence>
<evidence type="ECO:0000256" key="2">
    <source>
        <dbReference type="SAM" id="MobiDB-lite"/>
    </source>
</evidence>
<evidence type="ECO:0000305" key="3"/>
<keyword id="KW-0688">Ribosomal frameshifting</keyword>
<name>ALT2B_EMCV</name>
<organismHost>
    <name type="scientific">Aotus trivirgatus</name>
    <name type="common">Three-striped night monkey</name>
    <name type="synonym">Douroucouli</name>
    <dbReference type="NCBI Taxonomy" id="9505"/>
</organismHost>
<organismHost>
    <name type="scientific">Callitrichinae sp.</name>
    <dbReference type="NCBI Taxonomy" id="38020"/>
</organismHost>
<organismHost>
    <name type="scientific">Homo sapiens</name>
    <name type="common">Human</name>
    <dbReference type="NCBI Taxonomy" id="9606"/>
</organismHost>
<organismHost>
    <name type="scientific">Macaca mulatta</name>
    <name type="common">Rhesus macaque</name>
    <dbReference type="NCBI Taxonomy" id="9544"/>
</organismHost>
<organismHost>
    <name type="scientific">Mandrillus</name>
    <name type="common">forest baboons</name>
    <dbReference type="NCBI Taxonomy" id="9567"/>
</organismHost>
<organismHost>
    <name type="scientific">Mus musculus</name>
    <name type="common">Mouse</name>
    <dbReference type="NCBI Taxonomy" id="10090"/>
</organismHost>
<organismHost>
    <name type="scientific">Pan troglodytes</name>
    <name type="common">Chimpanzee</name>
    <dbReference type="NCBI Taxonomy" id="9598"/>
</organismHost>
<organismHost>
    <name type="scientific">Rattus</name>
    <dbReference type="NCBI Taxonomy" id="10114"/>
</organismHost>
<organismHost>
    <name type="scientific">Sigmodon hispidus</name>
    <name type="common">Hispid cotton rat</name>
    <dbReference type="NCBI Taxonomy" id="42415"/>
</organismHost>
<organismHost>
    <name type="scientific">Sus scrofa</name>
    <name type="common">Pig</name>
    <dbReference type="NCBI Taxonomy" id="9823"/>
</organismHost>
<accession>P0DJX7</accession>
<comment type="alternative products">
    <event type="ribosomal frameshifting"/>
    <isoform>
        <id>P0DJX7-1</id>
        <name>2B*</name>
        <sequence type="displayed"/>
    </isoform>
    <isoform>
        <id>P03304-1</id>
        <name>Genome polyprotein</name>
        <sequence type="external"/>
    </isoform>
</comment>
<comment type="miscellaneous">
    <molecule>Isoform 2B*</molecule>
    <text evidence="1">Produced by -1 ribosomal frameshifting.</text>
</comment>
<comment type="similarity">
    <text evidence="3">Belongs to the encephalomyocarditis virus protein 2B* family.</text>
</comment>
<protein>
    <recommendedName>
        <fullName>Protein 2B*</fullName>
    </recommendedName>
</protein>
<organism>
    <name type="scientific">Encephalomyocarditis virus</name>
    <dbReference type="NCBI Taxonomy" id="12104"/>
    <lineage>
        <taxon>Viruses</taxon>
        <taxon>Riboviria</taxon>
        <taxon>Orthornavirae</taxon>
        <taxon>Pisuviricota</taxon>
        <taxon>Pisoniviricetes</taxon>
        <taxon>Picornavirales</taxon>
        <taxon>Picornaviridae</taxon>
        <taxon>Caphthovirinae</taxon>
        <taxon>Cardiovirus</taxon>
        <taxon>Cardiovirus A</taxon>
    </lineage>
</organism>
<dbReference type="EMBL" id="X00463">
    <property type="status" value="NOT_ANNOTATED_CDS"/>
    <property type="molecule type" value="Genomic_RNA"/>
</dbReference>
<dbReference type="RefSeq" id="YP_006383903.2">
    <molecule id="P0DJX7-1"/>
    <property type="nucleotide sequence ID" value="YP_006383902.1"/>
</dbReference>
<dbReference type="Proteomes" id="UP000008660">
    <property type="component" value="Genome"/>
</dbReference>
<dbReference type="GO" id="GO:0075523">
    <property type="term" value="P:viral translational frameshifting"/>
    <property type="evidence" value="ECO:0007669"/>
    <property type="project" value="UniProtKB-KW"/>
</dbReference>
<proteinExistence type="inferred from homology"/>